<proteinExistence type="evidence at protein level"/>
<dbReference type="EC" id="6.3.4.15" evidence="1"/>
<dbReference type="EMBL" id="M10123">
    <property type="protein sequence ID" value="AAA23520.1"/>
    <property type="molecule type" value="Genomic_DNA"/>
</dbReference>
<dbReference type="EMBL" id="M15820">
    <property type="protein sequence ID" value="AAA23521.1"/>
    <property type="molecule type" value="Genomic_DNA"/>
</dbReference>
<dbReference type="EMBL" id="L14557">
    <property type="protein sequence ID" value="AAA24186.1"/>
    <property type="molecule type" value="Genomic_DNA"/>
</dbReference>
<dbReference type="EMBL" id="U00006">
    <property type="protein sequence ID" value="AAC43075.1"/>
    <property type="molecule type" value="Genomic_DNA"/>
</dbReference>
<dbReference type="EMBL" id="U00096">
    <property type="protein sequence ID" value="AAC76951.1"/>
    <property type="molecule type" value="Genomic_DNA"/>
</dbReference>
<dbReference type="EMBL" id="AP009048">
    <property type="protein sequence ID" value="BAE77342.1"/>
    <property type="molecule type" value="Genomic_DNA"/>
</dbReference>
<dbReference type="PIR" id="B24029">
    <property type="entry name" value="BVECBF"/>
</dbReference>
<dbReference type="RefSeq" id="NP_418404.1">
    <property type="nucleotide sequence ID" value="NC_000913.3"/>
</dbReference>
<dbReference type="RefSeq" id="WP_000654630.1">
    <property type="nucleotide sequence ID" value="NZ_SSZK01000084.1"/>
</dbReference>
<dbReference type="PDB" id="1BIA">
    <property type="method" value="X-ray"/>
    <property type="resolution" value="2.30 A"/>
    <property type="chains" value="A=1-321"/>
</dbReference>
<dbReference type="PDB" id="1BIB">
    <property type="method" value="X-ray"/>
    <property type="resolution" value="2.80 A"/>
    <property type="chains" value="A=1-321"/>
</dbReference>
<dbReference type="PDB" id="1HXD">
    <property type="method" value="X-ray"/>
    <property type="resolution" value="2.40 A"/>
    <property type="chains" value="A/B=1-321"/>
</dbReference>
<dbReference type="PDB" id="2EWN">
    <property type="method" value="X-ray"/>
    <property type="resolution" value="2.80 A"/>
    <property type="chains" value="A/B=1-321"/>
</dbReference>
<dbReference type="PDB" id="4WF2">
    <property type="method" value="X-ray"/>
    <property type="resolution" value="2.31 A"/>
    <property type="chains" value="A=1-321"/>
</dbReference>
<dbReference type="PDBsum" id="1BIA"/>
<dbReference type="PDBsum" id="1BIB"/>
<dbReference type="PDBsum" id="1HXD"/>
<dbReference type="PDBsum" id="2EWN"/>
<dbReference type="PDBsum" id="4WF2"/>
<dbReference type="SMR" id="P06709"/>
<dbReference type="BioGRID" id="4263391">
    <property type="interactions" value="317"/>
</dbReference>
<dbReference type="DIP" id="DIP-9224N"/>
<dbReference type="FunCoup" id="P06709">
    <property type="interactions" value="631"/>
</dbReference>
<dbReference type="IntAct" id="P06709">
    <property type="interactions" value="7"/>
</dbReference>
<dbReference type="STRING" id="511145.b3973"/>
<dbReference type="BindingDB" id="P06709"/>
<dbReference type="ChEMBL" id="CHEMBL3559644"/>
<dbReference type="DrugBank" id="DB04651">
    <property type="generic name" value="BIOTINOL-5-AMP"/>
</dbReference>
<dbReference type="MoonProt" id="P06709"/>
<dbReference type="jPOST" id="P06709"/>
<dbReference type="PaxDb" id="511145-b3973"/>
<dbReference type="EnsemblBacteria" id="AAC76951">
    <property type="protein sequence ID" value="AAC76951"/>
    <property type="gene ID" value="b3973"/>
</dbReference>
<dbReference type="GeneID" id="948469"/>
<dbReference type="KEGG" id="ecj:JW3941"/>
<dbReference type="KEGG" id="eco:b3973"/>
<dbReference type="KEGG" id="ecoc:C3026_21465"/>
<dbReference type="PATRIC" id="fig|1411691.4.peg.2735"/>
<dbReference type="EchoBASE" id="EB0121"/>
<dbReference type="eggNOG" id="COG0340">
    <property type="taxonomic scope" value="Bacteria"/>
</dbReference>
<dbReference type="eggNOG" id="COG1654">
    <property type="taxonomic scope" value="Bacteria"/>
</dbReference>
<dbReference type="HOGENOM" id="CLU_051096_4_0_6"/>
<dbReference type="InParanoid" id="P06709"/>
<dbReference type="OMA" id="AVWKHIE"/>
<dbReference type="OrthoDB" id="9807064at2"/>
<dbReference type="PhylomeDB" id="P06709"/>
<dbReference type="BioCyc" id="EcoCyc:BIOTINLIG-MONOMER"/>
<dbReference type="BioCyc" id="MetaCyc:BIOTINLIG-MONOMER"/>
<dbReference type="BRENDA" id="6.3.4.15">
    <property type="organism ID" value="2026"/>
</dbReference>
<dbReference type="EvolutionaryTrace" id="P06709"/>
<dbReference type="PRO" id="PR:P06709"/>
<dbReference type="Proteomes" id="UP000000625">
    <property type="component" value="Chromosome"/>
</dbReference>
<dbReference type="GO" id="GO:0005737">
    <property type="term" value="C:cytoplasm"/>
    <property type="evidence" value="ECO:0000318"/>
    <property type="project" value="GO_Central"/>
</dbReference>
<dbReference type="GO" id="GO:0017053">
    <property type="term" value="C:transcription repressor complex"/>
    <property type="evidence" value="ECO:0000314"/>
    <property type="project" value="CAFA"/>
</dbReference>
<dbReference type="GO" id="GO:0005524">
    <property type="term" value="F:ATP binding"/>
    <property type="evidence" value="ECO:0000315"/>
    <property type="project" value="CAFA"/>
</dbReference>
<dbReference type="GO" id="GO:0009374">
    <property type="term" value="F:biotin binding"/>
    <property type="evidence" value="ECO:0000314"/>
    <property type="project" value="CAFA"/>
</dbReference>
<dbReference type="GO" id="GO:0004077">
    <property type="term" value="F:biotin--[biotin carboxyl-carrier protein] ligase activity"/>
    <property type="evidence" value="ECO:0000314"/>
    <property type="project" value="EcoliWiki"/>
</dbReference>
<dbReference type="GO" id="GO:0003677">
    <property type="term" value="F:DNA binding"/>
    <property type="evidence" value="ECO:0000314"/>
    <property type="project" value="EcoliWiki"/>
</dbReference>
<dbReference type="GO" id="GO:0003676">
    <property type="term" value="F:nucleic acid binding"/>
    <property type="evidence" value="ECO:0000269"/>
    <property type="project" value="DisProt"/>
</dbReference>
<dbReference type="GO" id="GO:0042803">
    <property type="term" value="F:protein homodimerization activity"/>
    <property type="evidence" value="ECO:0000315"/>
    <property type="project" value="CAFA"/>
</dbReference>
<dbReference type="GO" id="GO:0000976">
    <property type="term" value="F:transcription cis-regulatory region binding"/>
    <property type="evidence" value="ECO:0000315"/>
    <property type="project" value="CAFA"/>
</dbReference>
<dbReference type="GO" id="GO:0009102">
    <property type="term" value="P:biotin biosynthetic process"/>
    <property type="evidence" value="ECO:0000315"/>
    <property type="project" value="EcoliWiki"/>
</dbReference>
<dbReference type="GO" id="GO:0006768">
    <property type="term" value="P:biotin metabolic process"/>
    <property type="evidence" value="ECO:0000315"/>
    <property type="project" value="CAFA"/>
</dbReference>
<dbReference type="GO" id="GO:0036211">
    <property type="term" value="P:protein modification process"/>
    <property type="evidence" value="ECO:0007669"/>
    <property type="project" value="InterPro"/>
</dbReference>
<dbReference type="GO" id="GO:0006355">
    <property type="term" value="P:regulation of DNA-templated transcription"/>
    <property type="evidence" value="ECO:0007669"/>
    <property type="project" value="UniProtKB-UniRule"/>
</dbReference>
<dbReference type="CDD" id="cd16442">
    <property type="entry name" value="BPL"/>
    <property type="match status" value="1"/>
</dbReference>
<dbReference type="DisProt" id="DP00349"/>
<dbReference type="FunFam" id="1.10.10.10:FF:000356">
    <property type="entry name" value="Bifunctional ligase/repressor BirA"/>
    <property type="match status" value="1"/>
</dbReference>
<dbReference type="FunFam" id="2.30.30.100:FF:000030">
    <property type="entry name" value="Bifunctional ligase/repressor BirA"/>
    <property type="match status" value="1"/>
</dbReference>
<dbReference type="FunFam" id="3.30.930.10:FF:000050">
    <property type="entry name" value="Bifunctional ligase/repressor BirA"/>
    <property type="match status" value="1"/>
</dbReference>
<dbReference type="Gene3D" id="2.30.30.100">
    <property type="match status" value="1"/>
</dbReference>
<dbReference type="Gene3D" id="3.30.930.10">
    <property type="entry name" value="Bira Bifunctional Protein, Domain 2"/>
    <property type="match status" value="1"/>
</dbReference>
<dbReference type="Gene3D" id="1.10.10.10">
    <property type="entry name" value="Winged helix-like DNA-binding domain superfamily/Winged helix DNA-binding domain"/>
    <property type="match status" value="1"/>
</dbReference>
<dbReference type="HAMAP" id="MF_00978">
    <property type="entry name" value="Bifunct_BirA"/>
    <property type="match status" value="1"/>
</dbReference>
<dbReference type="InterPro" id="IPR045864">
    <property type="entry name" value="aa-tRNA-synth_II/BPL/LPL"/>
</dbReference>
<dbReference type="InterPro" id="IPR030855">
    <property type="entry name" value="Bifunct_BirA"/>
</dbReference>
<dbReference type="InterPro" id="IPR004408">
    <property type="entry name" value="Biotin_CoA_COase_ligase"/>
</dbReference>
<dbReference type="InterPro" id="IPR004409">
    <property type="entry name" value="Biotin_operon_repress_HTH"/>
</dbReference>
<dbReference type="InterPro" id="IPR003142">
    <property type="entry name" value="BPL_C"/>
</dbReference>
<dbReference type="InterPro" id="IPR004143">
    <property type="entry name" value="BPL_LPL_catalytic"/>
</dbReference>
<dbReference type="InterPro" id="IPR013196">
    <property type="entry name" value="HTH_11"/>
</dbReference>
<dbReference type="InterPro" id="IPR008988">
    <property type="entry name" value="Transcriptional_repressor_C"/>
</dbReference>
<dbReference type="InterPro" id="IPR036388">
    <property type="entry name" value="WH-like_DNA-bd_sf"/>
</dbReference>
<dbReference type="InterPro" id="IPR036390">
    <property type="entry name" value="WH_DNA-bd_sf"/>
</dbReference>
<dbReference type="NCBIfam" id="TIGR00121">
    <property type="entry name" value="birA_ligase"/>
    <property type="match status" value="1"/>
</dbReference>
<dbReference type="NCBIfam" id="TIGR00122">
    <property type="entry name" value="birA_repr_reg"/>
    <property type="match status" value="1"/>
</dbReference>
<dbReference type="NCBIfam" id="NF008847">
    <property type="entry name" value="PRK11886.1-2"/>
    <property type="match status" value="1"/>
</dbReference>
<dbReference type="NCBIfam" id="NF008849">
    <property type="entry name" value="PRK11886.1-4"/>
    <property type="match status" value="1"/>
</dbReference>
<dbReference type="PANTHER" id="PTHR12835">
    <property type="entry name" value="BIOTIN PROTEIN LIGASE"/>
    <property type="match status" value="1"/>
</dbReference>
<dbReference type="PANTHER" id="PTHR12835:SF5">
    <property type="entry name" value="BIOTIN--PROTEIN LIGASE"/>
    <property type="match status" value="1"/>
</dbReference>
<dbReference type="Pfam" id="PF02237">
    <property type="entry name" value="BPL_C"/>
    <property type="match status" value="1"/>
</dbReference>
<dbReference type="Pfam" id="PF03099">
    <property type="entry name" value="BPL_LplA_LipB"/>
    <property type="match status" value="1"/>
</dbReference>
<dbReference type="Pfam" id="PF08279">
    <property type="entry name" value="HTH_11"/>
    <property type="match status" value="1"/>
</dbReference>
<dbReference type="SUPFAM" id="SSF50037">
    <property type="entry name" value="C-terminal domain of transcriptional repressors"/>
    <property type="match status" value="1"/>
</dbReference>
<dbReference type="SUPFAM" id="SSF55681">
    <property type="entry name" value="Class II aaRS and biotin synthetases"/>
    <property type="match status" value="1"/>
</dbReference>
<dbReference type="SUPFAM" id="SSF46785">
    <property type="entry name" value="Winged helix' DNA-binding domain"/>
    <property type="match status" value="1"/>
</dbReference>
<dbReference type="PROSITE" id="PS51733">
    <property type="entry name" value="BPL_LPL_CATALYTIC"/>
    <property type="match status" value="1"/>
</dbReference>
<name>BIRA_ECOLI</name>
<comment type="function">
    <text evidence="1 4 9 10 11">Acts both as a biotin--[acetyl-CoA-carboxylase] ligase and a biotin-operon repressor. In the presence of ATP, BirA activates biotin to form the BirA-biotinyl-5'-adenylate (BirA-bio-5'-AMP or holoBirA) complex. HoloBirA can either transfer the biotinyl moiety to the biotin carboxyl carrier protein (BCCP) subunit of acetyl-CoA carboxylase, or bind to the biotin operator site and inhibit transcription of the operon.</text>
</comment>
<comment type="catalytic activity">
    <reaction evidence="1 10 11">
        <text>biotin + L-lysyl-[protein] + ATP = N(6)-biotinyl-L-lysyl-[protein] + AMP + diphosphate + H(+)</text>
        <dbReference type="Rhea" id="RHEA:11756"/>
        <dbReference type="Rhea" id="RHEA-COMP:9752"/>
        <dbReference type="Rhea" id="RHEA-COMP:10505"/>
        <dbReference type="ChEBI" id="CHEBI:15378"/>
        <dbReference type="ChEBI" id="CHEBI:29969"/>
        <dbReference type="ChEBI" id="CHEBI:30616"/>
        <dbReference type="ChEBI" id="CHEBI:33019"/>
        <dbReference type="ChEBI" id="CHEBI:57586"/>
        <dbReference type="ChEBI" id="CHEBI:83144"/>
        <dbReference type="ChEBI" id="CHEBI:456215"/>
        <dbReference type="EC" id="6.3.4.15"/>
    </reaction>
</comment>
<comment type="activity regulation">
    <text evidence="7">The switch between the enzymatic activity and the repressor activity is regulated by cellular demand for biotin. The switch occurs by swapping of protein interaction partners by holoBirA. In conditions of high biotin demand, holoBirA associates with apoBCCP to transfer biotin. In conditions of low biotin demand, holoBirA dimerizes, binds DNA and represses transcription of the biotin operon.</text>
</comment>
<comment type="subunit">
    <text evidence="3 4 5 6 7 10">Monomer in solution. Interacts with BCCP. Homodimerizes to bind DNA. Interaction with the corepressor bio-5'-AMP increases dimerization.</text>
</comment>
<comment type="interaction">
    <interactant intactId="EBI-545740">
        <id>P06709</id>
    </interactant>
    <interactant intactId="EBI-561432">
        <id>P0A761</id>
        <label>nanE</label>
    </interactant>
    <organismsDiffer>false</organismsDiffer>
    <experiments>2</experiments>
</comment>
<comment type="domain">
    <text evidence="3 5 6 8">Contains an N-terminal helix-turn-helix DNA-binding domain, connected via a linker to the central catalytic domain and the C-terminal domain, which plays roles in dimerization, catalytic function and DNA binding. The N-terminal domain is required for both ligase and repressor activities. It may orient the active site and thereby play an important role in enzymatic activity.</text>
</comment>
<comment type="similarity">
    <text evidence="1">Belongs to the biotin--protein ligase family.</text>
</comment>
<reference key="1">
    <citation type="journal article" date="1985" name="Gene">
        <title>Nucleotide sequence of the birA gene encoding the biotin operon repressor and biotin holoenzyme synthetase functions of Escherichia coli.</title>
        <authorList>
            <person name="Howard P.K."/>
            <person name="Shaw J."/>
            <person name="Otsuka A.J."/>
        </authorList>
    </citation>
    <scope>NUCLEOTIDE SEQUENCE [GENOMIC DNA]</scope>
</reference>
<reference key="2">
    <citation type="journal article" date="1986" name="Gene">
        <title>DNA-binding and enzymatic domains of the bifunctional biotin operon repressor (BirA) of Escherichia coli.</title>
        <authorList>
            <person name="Buoncristiani M.R."/>
            <person name="Howard P.K."/>
            <person name="Otsuka A.J."/>
        </authorList>
    </citation>
    <scope>NUCLEOTIDE SEQUENCE [GENOMIC DNA]</scope>
</reference>
<reference key="3">
    <citation type="journal article" date="1993" name="Nucleic Acids Res.">
        <title>Analysis of the Escherichia coli genome. IV. DNA sequence of the region from 89.2 to 92.8 minutes.</title>
        <authorList>
            <person name="Blattner F.R."/>
            <person name="Burland V.D."/>
            <person name="Plunkett G. III"/>
            <person name="Sofia H.J."/>
            <person name="Daniels D.L."/>
        </authorList>
    </citation>
    <scope>NUCLEOTIDE SEQUENCE [LARGE SCALE GENOMIC DNA]</scope>
    <source>
        <strain>K12 / MG1655 / ATCC 47076</strain>
    </source>
</reference>
<reference key="4">
    <citation type="journal article" date="1997" name="Science">
        <title>The complete genome sequence of Escherichia coli K-12.</title>
        <authorList>
            <person name="Blattner F.R."/>
            <person name="Plunkett G. III"/>
            <person name="Bloch C.A."/>
            <person name="Perna N.T."/>
            <person name="Burland V."/>
            <person name="Riley M."/>
            <person name="Collado-Vides J."/>
            <person name="Glasner J.D."/>
            <person name="Rode C.K."/>
            <person name="Mayhew G.F."/>
            <person name="Gregor J."/>
            <person name="Davis N.W."/>
            <person name="Kirkpatrick H.A."/>
            <person name="Goeden M.A."/>
            <person name="Rose D.J."/>
            <person name="Mau B."/>
            <person name="Shao Y."/>
        </authorList>
    </citation>
    <scope>NUCLEOTIDE SEQUENCE [LARGE SCALE GENOMIC DNA]</scope>
    <source>
        <strain>K12 / MG1655 / ATCC 47076</strain>
    </source>
</reference>
<reference key="5">
    <citation type="journal article" date="2006" name="Mol. Syst. Biol.">
        <title>Highly accurate genome sequences of Escherichia coli K-12 strains MG1655 and W3110.</title>
        <authorList>
            <person name="Hayashi K."/>
            <person name="Morooka N."/>
            <person name="Yamamoto Y."/>
            <person name="Fujita K."/>
            <person name="Isono K."/>
            <person name="Choi S."/>
            <person name="Ohtsubo E."/>
            <person name="Baba T."/>
            <person name="Wanner B.L."/>
            <person name="Mori H."/>
            <person name="Horiuchi T."/>
        </authorList>
    </citation>
    <scope>NUCLEOTIDE SEQUENCE [LARGE SCALE GENOMIC DNA]</scope>
    <source>
        <strain>K12 / W3110 / ATCC 27325 / DSM 5911</strain>
    </source>
</reference>
<reference key="6">
    <citation type="journal article" date="1992" name="J. Bacteriol.">
        <title>Cloning and identification of the Escherichia coli murB DNA sequence, which encodes UDP-N-acetylenolpyruvoylglucosamine reductase.</title>
        <authorList>
            <person name="Pucci M.J."/>
            <person name="Discotto L.F."/>
            <person name="Dougherty T.J."/>
        </authorList>
    </citation>
    <scope>NUCLEOTIDE SEQUENCE [GENOMIC DNA] OF 1-76</scope>
    <source>
        <strain>RDD012</strain>
    </source>
</reference>
<reference key="7">
    <citation type="journal article" date="1992" name="J. Bacteriol.">
        <title>Cloning, sequencing, and expression of the pantothenate kinase (coaA) gene of Escherichia coli.</title>
        <authorList>
            <person name="Song W.-J."/>
            <person name="Jackowski S."/>
        </authorList>
    </citation>
    <scope>NUCLEOTIDE SEQUENCE [GENOMIC DNA] OF 226-321</scope>
</reference>
<reference key="8">
    <citation type="journal article" date="1982" name="J. Biol. Chem.">
        <title>Purification and properties of the biotin repressor. A bifunctional protein.</title>
        <authorList>
            <person name="Eisenberg M.A."/>
            <person name="Prakash O."/>
            <person name="Hsiung S.C."/>
        </authorList>
    </citation>
    <scope>FUNCTION</scope>
    <scope>CATALYTIC ACTIVITY</scope>
    <scope>SUBUNIT</scope>
</reference>
<reference key="9">
    <citation type="journal article" date="1989" name="Cell">
        <title>The E. coli bio operon: transcriptional repression by an essential protein modification enzyme.</title>
        <authorList>
            <person name="Cronan J.E. Jr."/>
        </authorList>
    </citation>
    <scope>FUNCTION</scope>
</reference>
<reference key="10">
    <citation type="journal article" date="1994" name="Biochemistry">
        <title>Kinetics of biotinyl-5'-adenylate synthesis catalyzed by the Escherichia coli repressor of biotin biosynthesis and the stability of the enzyme-product complex.</title>
        <authorList>
            <person name="Xu Y."/>
            <person name="Beckett D."/>
        </authorList>
    </citation>
    <scope>FUNCTION</scope>
    <scope>CATALYTIC ACTIVITY</scope>
</reference>
<reference key="11">
    <citation type="journal article" date="2003" name="J. Mol. Biol.">
        <title>Coupling of protein assembly and DNA binding: biotin repressor dimerization precedes biotin operator binding.</title>
        <authorList>
            <person name="Streaker E.D."/>
            <person name="Beckett D."/>
        </authorList>
    </citation>
    <scope>FUNCTION</scope>
    <scope>DNA-BINDING</scope>
    <scope>SUBUNIT</scope>
</reference>
<reference key="12">
    <citation type="journal article" date="2013" name="J. Biol. Chem.">
        <title>The wing of a winged helix-turn-helix transcription factor organizes the active site of BirA, a bifunctional repressor/ligase.</title>
        <authorList>
            <person name="Chakravartty V."/>
            <person name="Cronan J.E."/>
        </authorList>
    </citation>
    <scope>DOMAIN</scope>
    <scope>MUTAGENESIS OF THR-52; GLY-57 AND TYR-58</scope>
    <source>
        <strain>K12</strain>
    </source>
</reference>
<reference key="13">
    <citation type="journal article" date="2013" name="J. Mol. Biol.">
        <title>Protein:protein interactions in control of a transcriptional switch.</title>
        <authorList>
            <person name="Adikaram P.R."/>
            <person name="Beckett D."/>
        </authorList>
    </citation>
    <scope>ACTIVITY REGULATION</scope>
    <scope>SUBUNIT</scope>
    <scope>INTERACTION WITH BCCP</scope>
</reference>
<reference key="14">
    <citation type="journal article" date="1992" name="Proc. Natl. Acad. Sci. U.S.A.">
        <title>Escherichia coli biotin holoenzyme synthetase/bio repressor crystal structure delineates the biotin- and DNA-binding domains.</title>
        <authorList>
            <person name="Wilson K.P."/>
            <person name="Shewchuk L.M."/>
            <person name="Brennan R.G."/>
            <person name="Otsuka A.J."/>
            <person name="Matthews B.W."/>
        </authorList>
    </citation>
    <scope>X-RAY CRYSTALLOGRAPHY (2.30 ANGSTROMS) IN COMPLEX WITH BIOTIN</scope>
    <scope>DOMAIN</scope>
</reference>
<reference key="15">
    <citation type="journal article" date="2001" name="Proc. Natl. Acad. Sci. U.S.A.">
        <title>Corepressor-induced organization and assembly of the biotin repressor: a model for allosteric activation of a transcriptional regulator.</title>
        <authorList>
            <person name="Weaver L.H."/>
            <person name="Kwon K."/>
            <person name="Beckett D."/>
            <person name="Matthews B.W."/>
        </authorList>
    </citation>
    <scope>X-RAY CRYSTALLOGRAPHY (2.40 ANGSTROMS) IN COMPLEX WITH BIOTIN</scope>
    <scope>SUBUNIT</scope>
    <scope>DOMAIN</scope>
</reference>
<reference key="16">
    <citation type="journal article" date="2006" name="J. Mol. Biol.">
        <title>Co-repressor induced order and biotin repressor dimerization: a case for divergent followed by convergent evolution.</title>
        <authorList>
            <person name="Wood Z.A."/>
            <person name="Weaver L.H."/>
            <person name="Brown P.H."/>
            <person name="Beckett D."/>
            <person name="Matthews B.W."/>
        </authorList>
    </citation>
    <scope>X-RAY CRYSTALLOGRAPHY (2.80 ANGSTROMS) IN COMPLEX WITH BIOTINOL-5'-AMP</scope>
    <scope>SUBUNIT</scope>
    <scope>DOMAIN</scope>
</reference>
<organism>
    <name type="scientific">Escherichia coli (strain K12)</name>
    <dbReference type="NCBI Taxonomy" id="83333"/>
    <lineage>
        <taxon>Bacteria</taxon>
        <taxon>Pseudomonadati</taxon>
        <taxon>Pseudomonadota</taxon>
        <taxon>Gammaproteobacteria</taxon>
        <taxon>Enterobacterales</taxon>
        <taxon>Enterobacteriaceae</taxon>
        <taxon>Escherichia</taxon>
    </lineage>
</organism>
<keyword id="KW-0002">3D-structure</keyword>
<keyword id="KW-0067">ATP-binding</keyword>
<keyword id="KW-0092">Biotin</keyword>
<keyword id="KW-0238">DNA-binding</keyword>
<keyword id="KW-0436">Ligase</keyword>
<keyword id="KW-0547">Nucleotide-binding</keyword>
<keyword id="KW-1185">Reference proteome</keyword>
<keyword id="KW-0678">Repressor</keyword>
<keyword id="KW-0804">Transcription</keyword>
<keyword id="KW-0805">Transcription regulation</keyword>
<protein>
    <recommendedName>
        <fullName evidence="1">Bifunctional ligase/repressor BirA</fullName>
    </recommendedName>
    <alternativeName>
        <fullName evidence="1">Biotin operon repressor</fullName>
    </alternativeName>
    <alternativeName>
        <fullName evidence="1">Biotin--[acetyl-CoA-carboxylase] ligase</fullName>
        <ecNumber evidence="1">6.3.4.15</ecNumber>
    </alternativeName>
    <alternativeName>
        <fullName evidence="1">Biotin--protein ligase</fullName>
    </alternativeName>
    <alternativeName>
        <fullName evidence="1">Biotin-[acetyl-CoA carboxylase] synthetase</fullName>
    </alternativeName>
</protein>
<accession>P06709</accession>
<accession>Q2M8R4</accession>
<feature type="chain" id="PRO_0000064932" description="Bifunctional ligase/repressor BirA">
    <location>
        <begin position="1"/>
        <end position="321"/>
    </location>
</feature>
<feature type="domain" description="BPL/LPL catalytic" evidence="2">
    <location>
        <begin position="67"/>
        <end position="254"/>
    </location>
</feature>
<feature type="DNA-binding region" description="H-T-H motif" evidence="1">
    <location>
        <begin position="22"/>
        <end position="41"/>
    </location>
</feature>
<feature type="binding site">
    <location>
        <begin position="89"/>
        <end position="91"/>
    </location>
    <ligand>
        <name>biotin</name>
        <dbReference type="ChEBI" id="CHEBI:57586"/>
    </ligand>
</feature>
<feature type="binding site" evidence="1 3 5">
    <location>
        <position position="112"/>
    </location>
    <ligand>
        <name>biotin</name>
        <dbReference type="ChEBI" id="CHEBI:57586"/>
    </ligand>
</feature>
<feature type="binding site">
    <location>
        <begin position="116"/>
        <end position="118"/>
    </location>
    <ligand>
        <name>biotin</name>
        <dbReference type="ChEBI" id="CHEBI:57586"/>
    </ligand>
</feature>
<feature type="binding site" evidence="1 3 5">
    <location>
        <position position="183"/>
    </location>
    <ligand>
        <name>biotin</name>
        <dbReference type="ChEBI" id="CHEBI:57586"/>
    </ligand>
</feature>
<feature type="sequence variant" description="In strain: RDD012.">
    <original>P</original>
    <variation>A</variation>
    <location>
        <position position="61"/>
    </location>
</feature>
<feature type="sequence variant" description="In strain: RDD012.">
    <original>K</original>
    <variation>E</variation>
    <location>
        <position position="70"/>
    </location>
</feature>
<feature type="mutagenesis site" description="Does not affect repressor activity." evidence="8">
    <original>T</original>
    <variation>I</variation>
    <location>
        <position position="52"/>
    </location>
</feature>
<feature type="mutagenesis site" description="5-fold increase of repressor activity. Increases binding to DNA." evidence="8">
    <original>T</original>
    <variation>S</variation>
    <location>
        <position position="52"/>
    </location>
</feature>
<feature type="mutagenesis site" description="Lack of repressor activity. Does not bind DNA." evidence="8">
    <original>G</original>
    <variation>S</variation>
    <location>
        <position position="57"/>
    </location>
</feature>
<feature type="mutagenesis site" description="Lack of repressor activity." evidence="8">
    <original>Y</original>
    <variation>F</variation>
    <location>
        <position position="58"/>
    </location>
</feature>
<feature type="mutagenesis site" description="Does not affect repressor activity." evidence="8">
    <original>Y</original>
    <variation>T</variation>
    <location>
        <position position="58"/>
    </location>
</feature>
<feature type="helix" evidence="12">
    <location>
        <begin position="5"/>
        <end position="14"/>
    </location>
</feature>
<feature type="helix" evidence="12">
    <location>
        <begin position="22"/>
        <end position="29"/>
    </location>
</feature>
<feature type="helix" evidence="12">
    <location>
        <begin position="33"/>
        <end position="45"/>
    </location>
</feature>
<feature type="strand" evidence="12">
    <location>
        <begin position="51"/>
        <end position="53"/>
    </location>
</feature>
<feature type="turn" evidence="12">
    <location>
        <begin position="54"/>
        <end position="56"/>
    </location>
</feature>
<feature type="strand" evidence="12">
    <location>
        <begin position="57"/>
        <end position="59"/>
    </location>
</feature>
<feature type="helix" evidence="12">
    <location>
        <begin position="69"/>
        <end position="74"/>
    </location>
</feature>
<feature type="strand" evidence="14">
    <location>
        <begin position="76"/>
        <end position="79"/>
    </location>
</feature>
<feature type="strand" evidence="12">
    <location>
        <begin position="81"/>
        <end position="83"/>
    </location>
</feature>
<feature type="strand" evidence="12">
    <location>
        <begin position="85"/>
        <end position="88"/>
    </location>
</feature>
<feature type="helix" evidence="12">
    <location>
        <begin position="90"/>
        <end position="95"/>
    </location>
</feature>
<feature type="helix" evidence="12">
    <location>
        <begin position="96"/>
        <end position="100"/>
    </location>
</feature>
<feature type="strand" evidence="12">
    <location>
        <begin position="106"/>
        <end position="110"/>
    </location>
</feature>
<feature type="strand" evidence="12">
    <location>
        <begin position="129"/>
        <end position="139"/>
    </location>
</feature>
<feature type="helix" evidence="14">
    <location>
        <begin position="143"/>
        <end position="145"/>
    </location>
</feature>
<feature type="helix" evidence="12">
    <location>
        <begin position="147"/>
        <end position="163"/>
    </location>
</feature>
<feature type="strand" evidence="12">
    <location>
        <begin position="170"/>
        <end position="172"/>
    </location>
</feature>
<feature type="turn" evidence="12">
    <location>
        <begin position="173"/>
        <end position="175"/>
    </location>
</feature>
<feature type="strand" evidence="12">
    <location>
        <begin position="176"/>
        <end position="179"/>
    </location>
</feature>
<feature type="strand" evidence="12">
    <location>
        <begin position="182"/>
        <end position="192"/>
    </location>
</feature>
<feature type="strand" evidence="13">
    <location>
        <begin position="195"/>
        <end position="197"/>
    </location>
</feature>
<feature type="strand" evidence="12">
    <location>
        <begin position="199"/>
        <end position="208"/>
    </location>
</feature>
<feature type="turn" evidence="14">
    <location>
        <begin position="216"/>
        <end position="218"/>
    </location>
</feature>
<feature type="turn" evidence="12">
    <location>
        <begin position="226"/>
        <end position="230"/>
    </location>
</feature>
<feature type="helix" evidence="12">
    <location>
        <begin position="235"/>
        <end position="256"/>
    </location>
</feature>
<feature type="helix" evidence="12">
    <location>
        <begin position="259"/>
        <end position="261"/>
    </location>
</feature>
<feature type="helix" evidence="12">
    <location>
        <begin position="262"/>
        <end position="268"/>
    </location>
</feature>
<feature type="turn" evidence="12">
    <location>
        <begin position="270"/>
        <end position="273"/>
    </location>
</feature>
<feature type="strand" evidence="12">
    <location>
        <begin position="274"/>
        <end position="280"/>
    </location>
</feature>
<feature type="strand" evidence="12">
    <location>
        <begin position="283"/>
        <end position="292"/>
    </location>
</feature>
<feature type="turn" evidence="13">
    <location>
        <begin position="294"/>
        <end position="296"/>
    </location>
</feature>
<feature type="strand" evidence="12">
    <location>
        <begin position="298"/>
        <end position="302"/>
    </location>
</feature>
<feature type="strand" evidence="12">
    <location>
        <begin position="305"/>
        <end position="311"/>
    </location>
</feature>
<feature type="strand" evidence="12">
    <location>
        <begin position="313"/>
        <end position="316"/>
    </location>
</feature>
<sequence>MKDNTVPLKLIALLANGEFHSGEQLGETLGMSRAAINKHIQTLRDWGVDVFTVPGKGYSLPEPIQLLNAKQILGQLDGGSVAVLPVIDSTNQYLLDRIGELKSGDACIAEYQQAGRGRRGRKWFSPFGANLYLSMFWRLEQGPAAAIGLSLVIGIVMAEVLRKLGADKVRVKWPNDLYLQDRKLAGILVELTGKTGDAAQIVIGAGINMAMRRVEESVVNQGWITLQEAGINLDRNTLAAMLIRELRAALELFEQEGLAPYLSRWEKLDNFINRPVKLIIGDKEIFGISRGIDKQGALLLEQDGIIKPWMGGEISLRSAEK</sequence>
<gene>
    <name evidence="1" type="primary">birA</name>
    <name type="synonym">bioR</name>
    <name type="synonym">dhbB</name>
    <name type="ordered locus">b3973</name>
    <name type="ordered locus">JW3941</name>
</gene>
<evidence type="ECO:0000255" key="1">
    <source>
        <dbReference type="HAMAP-Rule" id="MF_00978"/>
    </source>
</evidence>
<evidence type="ECO:0000255" key="2">
    <source>
        <dbReference type="PROSITE-ProRule" id="PRU01067"/>
    </source>
</evidence>
<evidence type="ECO:0000269" key="3">
    <source>
    </source>
</evidence>
<evidence type="ECO:0000269" key="4">
    <source>
    </source>
</evidence>
<evidence type="ECO:0000269" key="5">
    <source>
    </source>
</evidence>
<evidence type="ECO:0000269" key="6">
    <source>
    </source>
</evidence>
<evidence type="ECO:0000269" key="7">
    <source>
    </source>
</evidence>
<evidence type="ECO:0000269" key="8">
    <source>
    </source>
</evidence>
<evidence type="ECO:0000269" key="9">
    <source>
    </source>
</evidence>
<evidence type="ECO:0000269" key="10">
    <source>
    </source>
</evidence>
<evidence type="ECO:0000269" key="11">
    <source>
    </source>
</evidence>
<evidence type="ECO:0007829" key="12">
    <source>
        <dbReference type="PDB" id="1BIA"/>
    </source>
</evidence>
<evidence type="ECO:0007829" key="13">
    <source>
        <dbReference type="PDB" id="1HXD"/>
    </source>
</evidence>
<evidence type="ECO:0007829" key="14">
    <source>
        <dbReference type="PDB" id="2EWN"/>
    </source>
</evidence>